<keyword id="KW-0325">Glycoprotein</keyword>
<keyword id="KW-0472">Membrane</keyword>
<keyword id="KW-1185">Reference proteome</keyword>
<keyword id="KW-0812">Transmembrane</keyword>
<keyword id="KW-1133">Transmembrane helix</keyword>
<sequence>MCSSKCTRYIGHSLVVFAVLCIVANILLYFPNGETKYAYEDHLSRFVWFFAGIVGGGLLILLPAFVFLGLEGEDCCGCWSCENYGKRCTMLSSIMAALIGIAGSGYCVIVAALGLAEGPKCGDSHGMWNYTFANTDGQYLLDPTTWSKCHEPNNIVEWNVTLFSILLALGGLEFILCLIQVINGVLEGMCSYCCSHQQQYDC</sequence>
<accession>P49111</accession>
<organism>
    <name type="scientific">Mesocricetus auratus</name>
    <name type="common">Golden hamster</name>
    <dbReference type="NCBI Taxonomy" id="10036"/>
    <lineage>
        <taxon>Eukaryota</taxon>
        <taxon>Metazoa</taxon>
        <taxon>Chordata</taxon>
        <taxon>Craniata</taxon>
        <taxon>Vertebrata</taxon>
        <taxon>Euteleostomi</taxon>
        <taxon>Mammalia</taxon>
        <taxon>Eutheria</taxon>
        <taxon>Euarchontoglires</taxon>
        <taxon>Glires</taxon>
        <taxon>Rodentia</taxon>
        <taxon>Myomorpha</taxon>
        <taxon>Muroidea</taxon>
        <taxon>Cricetidae</taxon>
        <taxon>Cricetinae</taxon>
        <taxon>Mesocricetus</taxon>
    </lineage>
</organism>
<reference key="1">
    <citation type="journal article" date="1996" name="Gene">
        <title>The cDNA cloning of the hamster homologue of the human L6 gene.</title>
        <authorList>
            <person name="Maruyama M."/>
            <person name="Kozuka-Hata K."/>
            <person name="Sakaguchi-Sanai A."/>
            <person name="Shioda S."/>
            <person name="Yamaguchi N."/>
            <person name="Maruyama K."/>
        </authorList>
    </citation>
    <scope>NUCLEOTIDE SEQUENCE [MRNA]</scope>
</reference>
<protein>
    <recommendedName>
        <fullName>Transmembrane 4 L6 family member 1</fullName>
    </recommendedName>
    <alternativeName>
        <fullName>MM3</fullName>
    </alternativeName>
    <alternativeName>
        <fullName>Tumor-associated antigen L6 homolog</fullName>
    </alternativeName>
</protein>
<feature type="chain" id="PRO_0000219296" description="Transmembrane 4 L6 family member 1">
    <location>
        <begin position="1"/>
        <end position="202"/>
    </location>
</feature>
<feature type="topological domain" description="Cytoplasmic" evidence="2">
    <location>
        <begin position="1"/>
        <end position="9"/>
    </location>
</feature>
<feature type="transmembrane region" description="Helical" evidence="2">
    <location>
        <begin position="10"/>
        <end position="30"/>
    </location>
</feature>
<feature type="topological domain" description="Extracellular" evidence="2">
    <location>
        <begin position="31"/>
        <end position="49"/>
    </location>
</feature>
<feature type="transmembrane region" description="Helical" evidence="2">
    <location>
        <begin position="50"/>
        <end position="70"/>
    </location>
</feature>
<feature type="topological domain" description="Cytoplasmic" evidence="2">
    <location>
        <begin position="71"/>
        <end position="93"/>
    </location>
</feature>
<feature type="transmembrane region" description="Helical" evidence="2">
    <location>
        <begin position="94"/>
        <end position="114"/>
    </location>
</feature>
<feature type="topological domain" description="Extracellular" evidence="2">
    <location>
        <begin position="115"/>
        <end position="161"/>
    </location>
</feature>
<feature type="transmembrane region" description="Helical" evidence="2">
    <location>
        <begin position="162"/>
        <end position="182"/>
    </location>
</feature>
<feature type="topological domain" description="Cytoplasmic" evidence="2">
    <location>
        <begin position="183"/>
        <end position="202"/>
    </location>
</feature>
<feature type="glycosylation site" description="N-linked (GlcNAc...) asparagine" evidence="2">
    <location>
        <position position="129"/>
    </location>
</feature>
<feature type="glycosylation site" description="N-linked (GlcNAc...) asparagine" evidence="2">
    <location>
        <position position="159"/>
    </location>
</feature>
<gene>
    <name type="primary">TM4SF1</name>
    <name type="synonym">TAAL6</name>
</gene>
<evidence type="ECO:0000250" key="1">
    <source>
        <dbReference type="UniProtKB" id="P30408"/>
    </source>
</evidence>
<evidence type="ECO:0000255" key="2"/>
<evidence type="ECO:0000305" key="3"/>
<proteinExistence type="evidence at transcript level"/>
<comment type="subunit">
    <text evidence="1">Present in high molecular weight complexes in tumor cells. Interacts with SDCBP2 (By similarity).</text>
</comment>
<comment type="subcellular location">
    <subcellularLocation>
        <location>Membrane</location>
        <topology>Multi-pass membrane protein</topology>
    </subcellularLocation>
    <text evidence="1">Colocalizes with SDCBP2 in the apical region of the cell.</text>
</comment>
<comment type="similarity">
    <text evidence="3">Belongs to the L6 tetraspanin family.</text>
</comment>
<name>T4S1_MESAU</name>
<dbReference type="RefSeq" id="NP_001268342.1">
    <property type="nucleotide sequence ID" value="NM_001281413.1"/>
</dbReference>
<dbReference type="STRING" id="10036.ENSMAUP00000001651"/>
<dbReference type="GlyCosmos" id="P49111">
    <property type="glycosylation" value="2 sites, No reported glycans"/>
</dbReference>
<dbReference type="GeneID" id="101833523"/>
<dbReference type="KEGG" id="maua:101833523"/>
<dbReference type="CTD" id="4071"/>
<dbReference type="eggNOG" id="ENOG502RY7H">
    <property type="taxonomic scope" value="Eukaryota"/>
</dbReference>
<dbReference type="OrthoDB" id="8697884at2759"/>
<dbReference type="Proteomes" id="UP000189706">
    <property type="component" value="Unplaced"/>
</dbReference>
<dbReference type="GO" id="GO:0016020">
    <property type="term" value="C:membrane"/>
    <property type="evidence" value="ECO:0007669"/>
    <property type="project" value="UniProtKB-SubCell"/>
</dbReference>
<dbReference type="InterPro" id="IPR008661">
    <property type="entry name" value="L6_membrane"/>
</dbReference>
<dbReference type="PANTHER" id="PTHR14198:SF18">
    <property type="entry name" value="TRANSMEMBRANE 4 L6 FAMILY MEMBER 1"/>
    <property type="match status" value="1"/>
</dbReference>
<dbReference type="PANTHER" id="PTHR14198">
    <property type="entry name" value="TRANSMEMBRANE 4 L6 FAMILY MEMBER 1-RELATED"/>
    <property type="match status" value="1"/>
</dbReference>
<dbReference type="Pfam" id="PF05805">
    <property type="entry name" value="L6_membrane"/>
    <property type="match status" value="1"/>
</dbReference>